<evidence type="ECO:0000250" key="1"/>
<evidence type="ECO:0000255" key="2">
    <source>
        <dbReference type="PROSITE-ProRule" id="PRU00028"/>
    </source>
</evidence>
<evidence type="ECO:0000305" key="3"/>
<protein>
    <recommendedName>
        <fullName>Beta-crystallin A3-1</fullName>
    </recommendedName>
</protein>
<dbReference type="EMBL" id="X87761">
    <property type="protein sequence ID" value="CAA61035.1"/>
    <property type="molecule type" value="mRNA"/>
</dbReference>
<dbReference type="PIR" id="JC4706">
    <property type="entry name" value="S55515"/>
</dbReference>
<dbReference type="SMR" id="Q91316"/>
<dbReference type="GO" id="GO:0005212">
    <property type="term" value="F:structural constituent of eye lens"/>
    <property type="evidence" value="ECO:0007669"/>
    <property type="project" value="UniProtKB-KW"/>
</dbReference>
<dbReference type="GO" id="GO:0002088">
    <property type="term" value="P:lens development in camera-type eye"/>
    <property type="evidence" value="ECO:0007669"/>
    <property type="project" value="TreeGrafter"/>
</dbReference>
<dbReference type="GO" id="GO:0007601">
    <property type="term" value="P:visual perception"/>
    <property type="evidence" value="ECO:0007669"/>
    <property type="project" value="TreeGrafter"/>
</dbReference>
<dbReference type="FunFam" id="2.60.20.10:FF:000004">
    <property type="entry name" value="Crystallin beta A4"/>
    <property type="match status" value="1"/>
</dbReference>
<dbReference type="FunFam" id="2.60.20.10:FF:000002">
    <property type="entry name" value="Crystallin, beta B2"/>
    <property type="match status" value="1"/>
</dbReference>
<dbReference type="Gene3D" id="2.60.20.10">
    <property type="entry name" value="Crystallins"/>
    <property type="match status" value="2"/>
</dbReference>
<dbReference type="InterPro" id="IPR050252">
    <property type="entry name" value="Beta/Gamma-Crystallin"/>
</dbReference>
<dbReference type="InterPro" id="IPR001064">
    <property type="entry name" value="Beta/gamma_crystallin"/>
</dbReference>
<dbReference type="InterPro" id="IPR011024">
    <property type="entry name" value="G_crystallin-like"/>
</dbReference>
<dbReference type="PANTHER" id="PTHR11818:SF8">
    <property type="entry name" value="BETA-CRYSTALLIN A3"/>
    <property type="match status" value="1"/>
</dbReference>
<dbReference type="PANTHER" id="PTHR11818">
    <property type="entry name" value="BETA/GAMMA CRYSTALLIN"/>
    <property type="match status" value="1"/>
</dbReference>
<dbReference type="Pfam" id="PF00030">
    <property type="entry name" value="Crystall"/>
    <property type="match status" value="2"/>
</dbReference>
<dbReference type="PRINTS" id="PR01367">
    <property type="entry name" value="BGCRYSTALLIN"/>
</dbReference>
<dbReference type="SMART" id="SM00247">
    <property type="entry name" value="XTALbg"/>
    <property type="match status" value="2"/>
</dbReference>
<dbReference type="SUPFAM" id="SSF49695">
    <property type="entry name" value="gamma-Crystallin-like"/>
    <property type="match status" value="1"/>
</dbReference>
<dbReference type="PROSITE" id="PS50915">
    <property type="entry name" value="CRYSTALLIN_BETA_GAMMA"/>
    <property type="match status" value="4"/>
</dbReference>
<name>CRB31_AQUCT</name>
<feature type="chain" id="PRO_0000057542" description="Beta-crystallin A3-1">
    <location>
        <begin position="1"/>
        <end position="215"/>
    </location>
</feature>
<feature type="domain" description="Beta/gamma crystallin 'Greek key' 1" evidence="2">
    <location>
        <begin position="31"/>
        <end position="70"/>
    </location>
</feature>
<feature type="domain" description="Beta/gamma crystallin 'Greek key' 2" evidence="2">
    <location>
        <begin position="71"/>
        <end position="117"/>
    </location>
</feature>
<feature type="domain" description="Beta/gamma crystallin 'Greek key' 3" evidence="2">
    <location>
        <begin position="124"/>
        <end position="165"/>
    </location>
</feature>
<feature type="domain" description="Beta/gamma crystallin 'Greek key' 4" evidence="2">
    <location>
        <begin position="166"/>
        <end position="214"/>
    </location>
</feature>
<feature type="region of interest" description="N-terminal arm">
    <location>
        <begin position="1"/>
        <end position="30"/>
    </location>
</feature>
<feature type="region of interest" description="Connecting peptide">
    <location>
        <begin position="118"/>
        <end position="123"/>
    </location>
</feature>
<comment type="function">
    <text>Crystallins are the dominant structural components of the vertebrate eye lens.</text>
</comment>
<comment type="subunit">
    <text evidence="1">Homo/heterodimer, or complexes of higher-order. The structure of beta-crystallin oligomers seems to be stabilized through interactions between the N-terminal arms (By similarity).</text>
</comment>
<comment type="domain">
    <text>Has a two-domain beta-structure, folded into four very similar Greek key motifs.</text>
</comment>
<comment type="PTM">
    <text>The N-terminus is blocked.</text>
</comment>
<comment type="similarity">
    <text evidence="3">Belongs to the beta/gamma-crystallin family.</text>
</comment>
<reference key="1">
    <citation type="journal article" date="1996" name="Biochem. Biophys. Res. Commun.">
        <title>Sequence analysis of four acidic beta-crystallin subunits of amphibian lenses: phylogenetic comparison between beta- and gamma-crystallins.</title>
        <authorList>
            <person name="Lu S.-F."/>
            <person name="Pan F.-M."/>
            <person name="Chiou S.-H."/>
        </authorList>
    </citation>
    <scope>NUCLEOTIDE SEQUENCE [MRNA]</scope>
    <source>
        <tissue>Lens</tissue>
    </source>
</reference>
<keyword id="KW-0273">Eye lens protein</keyword>
<keyword id="KW-0677">Repeat</keyword>
<accession>Q91316</accession>
<sequence>MEIPVDQTEREDITSEKMAQINPLPVHLGPWKITVYDQENFQGKRMEFTSSCANIMECGFDNIRSLKVECGAWIGYEHTSFCGQQFVLERGEYPRWDAWSGSNAYHIERLMSFRPICSANHIESKLVIFEKENFIGRQRELCDDYPSLQAMGWGNNEVGSMKVQCGAWVCYQYPGYRGYQYILESDHHGGEYKHWREWGSHAQTFQIQSIRRIQQ</sequence>
<organism>
    <name type="scientific">Aquarana catesbeiana</name>
    <name type="common">American bullfrog</name>
    <name type="synonym">Rana catesbeiana</name>
    <dbReference type="NCBI Taxonomy" id="8400"/>
    <lineage>
        <taxon>Eukaryota</taxon>
        <taxon>Metazoa</taxon>
        <taxon>Chordata</taxon>
        <taxon>Craniata</taxon>
        <taxon>Vertebrata</taxon>
        <taxon>Euteleostomi</taxon>
        <taxon>Amphibia</taxon>
        <taxon>Batrachia</taxon>
        <taxon>Anura</taxon>
        <taxon>Neobatrachia</taxon>
        <taxon>Ranoidea</taxon>
        <taxon>Ranidae</taxon>
        <taxon>Aquarana</taxon>
    </lineage>
</organism>
<proteinExistence type="evidence at transcript level"/>